<organism>
    <name type="scientific">Nematostella vectensis</name>
    <name type="common">Starlet sea anemone</name>
    <dbReference type="NCBI Taxonomy" id="45351"/>
    <lineage>
        <taxon>Eukaryota</taxon>
        <taxon>Metazoa</taxon>
        <taxon>Cnidaria</taxon>
        <taxon>Anthozoa</taxon>
        <taxon>Hexacorallia</taxon>
        <taxon>Actiniaria</taxon>
        <taxon>Edwardsiidae</taxon>
        <taxon>Nematostella</taxon>
    </lineage>
</organism>
<evidence type="ECO:0000255" key="1">
    <source>
        <dbReference type="HAMAP-Rule" id="MF_03115"/>
    </source>
</evidence>
<sequence>MEAVVDTNNFVLLLWSGAQLPKDIEAVVGSLTKKVGPNGKVSLEHSDRLHIASHAMSSFDVVLSGVCESPSLIHSMELLSKLAKLLKPDGKLILREPVGSNDSRSPEKIISTLKLSGFVSISQANEVKPSIVEISAQKPSFEVGAKTALSLSFAPKPAQPKAETSAAQIWTLSAQDIDDEDVDLLDSDTLLDEDDLKKPDPLSLKAACGPGSGKKKACKNCTCGLAEQENGDATEKKSVTSSCGSCYLGDAFRCSTCPYLGMPAFKPGEKIALTDRQLKGDL</sequence>
<gene>
    <name type="ORF">v1g167244</name>
</gene>
<keyword id="KW-0001">2Fe-2S</keyword>
<keyword id="KW-0004">4Fe-4S</keyword>
<keyword id="KW-0963">Cytoplasm</keyword>
<keyword id="KW-0408">Iron</keyword>
<keyword id="KW-0411">Iron-sulfur</keyword>
<keyword id="KW-0479">Metal-binding</keyword>
<keyword id="KW-0496">Mitochondrion</keyword>
<keyword id="KW-1185">Reference proteome</keyword>
<reference key="1">
    <citation type="journal article" date="2007" name="Science">
        <title>Sea anemone genome reveals ancestral eumetazoan gene repertoire and genomic organization.</title>
        <authorList>
            <person name="Putnam N.H."/>
            <person name="Srivastava M."/>
            <person name="Hellsten U."/>
            <person name="Dirks B."/>
            <person name="Chapman J."/>
            <person name="Salamov A."/>
            <person name="Terry A."/>
            <person name="Shapiro H."/>
            <person name="Lindquist E."/>
            <person name="Kapitonov V.V."/>
            <person name="Jurka J."/>
            <person name="Genikhovich G."/>
            <person name="Grigoriev I.V."/>
            <person name="Lucas S.M."/>
            <person name="Steele R.E."/>
            <person name="Finnerty J.R."/>
            <person name="Technau U."/>
            <person name="Martindale M.Q."/>
            <person name="Rokhsar D.S."/>
        </authorList>
    </citation>
    <scope>NUCLEOTIDE SEQUENCE [LARGE SCALE GENOMIC DNA]</scope>
    <source>
        <strain>CH2 X CH6</strain>
    </source>
</reference>
<feature type="chain" id="PRO_0000392327" description="Anamorsin homolog">
    <location>
        <begin position="1"/>
        <end position="282"/>
    </location>
</feature>
<feature type="region of interest" description="N-terminal SAM-like domain" evidence="1">
    <location>
        <begin position="5"/>
        <end position="151"/>
    </location>
</feature>
<feature type="region of interest" description="Linker" evidence="1">
    <location>
        <begin position="152"/>
        <end position="196"/>
    </location>
</feature>
<feature type="region of interest" description="Fe-S binding site A" evidence="1">
    <location>
        <begin position="208"/>
        <end position="223"/>
    </location>
</feature>
<feature type="region of interest" description="Fe-S binding site B" evidence="1">
    <location>
        <begin position="243"/>
        <end position="257"/>
    </location>
</feature>
<feature type="short sequence motif" description="Cx2C motif 1" evidence="1">
    <location>
        <begin position="243"/>
        <end position="246"/>
    </location>
</feature>
<feature type="short sequence motif" description="Cx2C motif 2" evidence="1">
    <location>
        <begin position="254"/>
        <end position="257"/>
    </location>
</feature>
<feature type="binding site" evidence="1">
    <location>
        <position position="208"/>
    </location>
    <ligand>
        <name>[2Fe-2S] cluster</name>
        <dbReference type="ChEBI" id="CHEBI:190135"/>
    </ligand>
</feature>
<feature type="binding site" evidence="1">
    <location>
        <position position="218"/>
    </location>
    <ligand>
        <name>[2Fe-2S] cluster</name>
        <dbReference type="ChEBI" id="CHEBI:190135"/>
    </ligand>
</feature>
<feature type="binding site" evidence="1">
    <location>
        <position position="221"/>
    </location>
    <ligand>
        <name>[2Fe-2S] cluster</name>
        <dbReference type="ChEBI" id="CHEBI:190135"/>
    </ligand>
</feature>
<feature type="binding site" evidence="1">
    <location>
        <position position="223"/>
    </location>
    <ligand>
        <name>[2Fe-2S] cluster</name>
        <dbReference type="ChEBI" id="CHEBI:190135"/>
    </ligand>
</feature>
<feature type="binding site" evidence="1">
    <location>
        <position position="243"/>
    </location>
    <ligand>
        <name>[4Fe-4S] cluster</name>
        <dbReference type="ChEBI" id="CHEBI:49883"/>
    </ligand>
</feature>
<feature type="binding site" evidence="1">
    <location>
        <position position="246"/>
    </location>
    <ligand>
        <name>[4Fe-4S] cluster</name>
        <dbReference type="ChEBI" id="CHEBI:49883"/>
    </ligand>
</feature>
<feature type="binding site" evidence="1">
    <location>
        <position position="254"/>
    </location>
    <ligand>
        <name>[4Fe-4S] cluster</name>
        <dbReference type="ChEBI" id="CHEBI:49883"/>
    </ligand>
</feature>
<feature type="binding site" evidence="1">
    <location>
        <position position="257"/>
    </location>
    <ligand>
        <name>[4Fe-4S] cluster</name>
        <dbReference type="ChEBI" id="CHEBI:49883"/>
    </ligand>
</feature>
<comment type="function">
    <text evidence="1">Component of the cytosolic iron-sulfur (Fe-S) protein assembly (CIA) machinery. Required for the maturation of extramitochondrial Fe-S proteins. Part of an electron transfer chain functioning in an early step of cytosolic Fe-S biogenesis, facilitating the de novo assembly of a [4Fe-4S] cluster on the cytosolic Fe-S scaffold complex. Electrons are transferred from NADPH via a FAD- and FMN-containing diflavin oxidoreductase. Together with the diflavin oxidoreductase, also required for the assembly of the diferric tyrosyl radical cofactor of ribonucleotide reductase (RNR), probably by providing electrons for reduction during radical cofactor maturation in the catalytic small subunit.</text>
</comment>
<comment type="cofactor">
    <cofactor evidence="1">
        <name>[2Fe-2S] cluster</name>
        <dbReference type="ChEBI" id="CHEBI:190135"/>
    </cofactor>
</comment>
<comment type="cofactor">
    <cofactor evidence="1">
        <name>[4Fe-4S] cluster</name>
        <dbReference type="ChEBI" id="CHEBI:49883"/>
    </cofactor>
</comment>
<comment type="subunit">
    <text evidence="1">Monomer.</text>
</comment>
<comment type="subcellular location">
    <subcellularLocation>
        <location evidence="1">Cytoplasm</location>
    </subcellularLocation>
    <subcellularLocation>
        <location evidence="1">Mitochondrion intermembrane space</location>
    </subcellularLocation>
</comment>
<comment type="domain">
    <text evidence="1">The C-terminal domain binds 2 Fe-S clusters but is otherwise mostly in an intrinsically disordered conformation.</text>
</comment>
<comment type="domain">
    <text evidence="1">The N-terminal domain has structural similarity with S-adenosyl-L-methionine-dependent methyltransferases, but does not bind S-adenosyl-L-methionine. It is required for correct assembly of the 2 Fe-S clusters.</text>
</comment>
<comment type="domain">
    <text evidence="1">The twin Cx2C motifs are involved in the recognition by the mitochondrial MIA40-ERV1 disulfide relay system. The formation of 2 disulfide bonds in the Cx2C motifs through dithiol/disulfide exchange reactions effectively traps the protein in the mitochondrial intermembrane space.</text>
</comment>
<comment type="similarity">
    <text evidence="1">Belongs to the anamorsin family.</text>
</comment>
<protein>
    <recommendedName>
        <fullName evidence="1">Anamorsin homolog</fullName>
    </recommendedName>
    <alternativeName>
        <fullName evidence="1">Fe-S cluster assembly protein DRE2 homolog</fullName>
    </alternativeName>
</protein>
<name>DRE2_NEMVE</name>
<dbReference type="EMBL" id="DS469590">
    <property type="protein sequence ID" value="EDO40522.1"/>
    <property type="molecule type" value="Genomic_DNA"/>
</dbReference>
<dbReference type="RefSeq" id="XP_001632585.1">
    <property type="nucleotide sequence ID" value="XM_001632535.1"/>
</dbReference>
<dbReference type="SMR" id="A7S710"/>
<dbReference type="FunCoup" id="A7S710">
    <property type="interactions" value="800"/>
</dbReference>
<dbReference type="STRING" id="45351.A7S710"/>
<dbReference type="EnsemblMetazoa" id="EDO40522">
    <property type="protein sequence ID" value="EDO40522"/>
    <property type="gene ID" value="NEMVEDRAFT_v1g167244"/>
</dbReference>
<dbReference type="KEGG" id="nve:5512265"/>
<dbReference type="eggNOG" id="KOG4020">
    <property type="taxonomic scope" value="Eukaryota"/>
</dbReference>
<dbReference type="HOGENOM" id="CLU_064393_1_0_1"/>
<dbReference type="InParanoid" id="A7S710"/>
<dbReference type="OMA" id="GFINCRE"/>
<dbReference type="OrthoDB" id="311633at2759"/>
<dbReference type="PhylomeDB" id="A7S710"/>
<dbReference type="Proteomes" id="UP000001593">
    <property type="component" value="Unassembled WGS sequence"/>
</dbReference>
<dbReference type="GO" id="GO:0005737">
    <property type="term" value="C:cytoplasm"/>
    <property type="evidence" value="ECO:0000318"/>
    <property type="project" value="GO_Central"/>
</dbReference>
<dbReference type="GO" id="GO:0005758">
    <property type="term" value="C:mitochondrial intermembrane space"/>
    <property type="evidence" value="ECO:0007669"/>
    <property type="project" value="UniProtKB-SubCell"/>
</dbReference>
<dbReference type="GO" id="GO:0051537">
    <property type="term" value="F:2 iron, 2 sulfur cluster binding"/>
    <property type="evidence" value="ECO:0007669"/>
    <property type="project" value="UniProtKB-UniRule"/>
</dbReference>
<dbReference type="GO" id="GO:0051539">
    <property type="term" value="F:4 iron, 4 sulfur cluster binding"/>
    <property type="evidence" value="ECO:0007669"/>
    <property type="project" value="UniProtKB-KW"/>
</dbReference>
<dbReference type="GO" id="GO:0009055">
    <property type="term" value="F:electron transfer activity"/>
    <property type="evidence" value="ECO:0007669"/>
    <property type="project" value="UniProtKB-UniRule"/>
</dbReference>
<dbReference type="GO" id="GO:0046872">
    <property type="term" value="F:metal ion binding"/>
    <property type="evidence" value="ECO:0007669"/>
    <property type="project" value="UniProtKB-KW"/>
</dbReference>
<dbReference type="GO" id="GO:0016226">
    <property type="term" value="P:iron-sulfur cluster assembly"/>
    <property type="evidence" value="ECO:0000318"/>
    <property type="project" value="GO_Central"/>
</dbReference>
<dbReference type="Gene3D" id="3.40.50.150">
    <property type="entry name" value="Vaccinia Virus protein VP39"/>
    <property type="match status" value="1"/>
</dbReference>
<dbReference type="HAMAP" id="MF_03115">
    <property type="entry name" value="Anamorsin"/>
    <property type="match status" value="1"/>
</dbReference>
<dbReference type="InterPro" id="IPR007785">
    <property type="entry name" value="Anamorsin"/>
</dbReference>
<dbReference type="InterPro" id="IPR049011">
    <property type="entry name" value="Anamorsin_N_metazoan"/>
</dbReference>
<dbReference type="InterPro" id="IPR046408">
    <property type="entry name" value="CIAPIN1"/>
</dbReference>
<dbReference type="InterPro" id="IPR029063">
    <property type="entry name" value="SAM-dependent_MTases_sf"/>
</dbReference>
<dbReference type="PANTHER" id="PTHR13273">
    <property type="entry name" value="ANAMORSIN"/>
    <property type="match status" value="1"/>
</dbReference>
<dbReference type="PANTHER" id="PTHR13273:SF14">
    <property type="entry name" value="ANAMORSIN"/>
    <property type="match status" value="1"/>
</dbReference>
<dbReference type="Pfam" id="PF20922">
    <property type="entry name" value="Anamorsin_N"/>
    <property type="match status" value="1"/>
</dbReference>
<dbReference type="Pfam" id="PF05093">
    <property type="entry name" value="CIAPIN1"/>
    <property type="match status" value="1"/>
</dbReference>
<dbReference type="SUPFAM" id="SSF53335">
    <property type="entry name" value="S-adenosyl-L-methionine-dependent methyltransferases"/>
    <property type="match status" value="1"/>
</dbReference>
<proteinExistence type="inferred from homology"/>
<accession>A7S710</accession>